<feature type="chain" id="PRO_0000153859" description="Ribonuclease P protein component 4">
    <location>
        <begin position="1"/>
        <end position="117"/>
    </location>
</feature>
<feature type="binding site" evidence="1 3 4">
    <location>
        <position position="63"/>
    </location>
    <ligand>
        <name>Zn(2+)</name>
        <dbReference type="ChEBI" id="CHEBI:29105"/>
    </ligand>
</feature>
<feature type="binding site" evidence="1 3 4">
    <location>
        <position position="66"/>
    </location>
    <ligand>
        <name>Zn(2+)</name>
        <dbReference type="ChEBI" id="CHEBI:29105"/>
    </ligand>
</feature>
<feature type="binding site" evidence="1 3 4">
    <location>
        <position position="92"/>
    </location>
    <ligand>
        <name>Zn(2+)</name>
        <dbReference type="ChEBI" id="CHEBI:29105"/>
    </ligand>
</feature>
<feature type="binding site" evidence="1 3 4">
    <location>
        <position position="95"/>
    </location>
    <ligand>
        <name>Zn(2+)</name>
        <dbReference type="ChEBI" id="CHEBI:29105"/>
    </ligand>
</feature>
<feature type="mutagenesis site" description="3-fold reduced binding to Rnp1." evidence="4">
    <original>A</original>
    <variation>V</variation>
    <location>
        <position position="14"/>
    </location>
</feature>
<feature type="helix" evidence="7">
    <location>
        <begin position="16"/>
        <end position="31"/>
    </location>
</feature>
<feature type="helix" evidence="7">
    <location>
        <begin position="33"/>
        <end position="50"/>
    </location>
</feature>
<feature type="turn" evidence="7">
    <location>
        <begin position="57"/>
        <end position="60"/>
    </location>
</feature>
<feature type="turn" evidence="7">
    <location>
        <begin position="64"/>
        <end position="66"/>
    </location>
</feature>
<feature type="turn" evidence="7">
    <location>
        <begin position="72"/>
        <end position="74"/>
    </location>
</feature>
<feature type="strand" evidence="7">
    <location>
        <begin position="75"/>
        <end position="81"/>
    </location>
</feature>
<feature type="strand" evidence="7">
    <location>
        <begin position="83"/>
        <end position="85"/>
    </location>
</feature>
<feature type="strand" evidence="7">
    <location>
        <begin position="87"/>
        <end position="92"/>
    </location>
</feature>
<feature type="turn" evidence="7">
    <location>
        <begin position="93"/>
        <end position="95"/>
    </location>
</feature>
<feature type="strand" evidence="7">
    <location>
        <begin position="98"/>
        <end position="102"/>
    </location>
</feature>
<organism>
    <name type="scientific">Pyrococcus furiosus (strain ATCC 43587 / DSM 3638 / JCM 8422 / Vc1)</name>
    <dbReference type="NCBI Taxonomy" id="186497"/>
    <lineage>
        <taxon>Archaea</taxon>
        <taxon>Methanobacteriati</taxon>
        <taxon>Methanobacteriota</taxon>
        <taxon>Thermococci</taxon>
        <taxon>Thermococcales</taxon>
        <taxon>Thermococcaceae</taxon>
        <taxon>Pyrococcus</taxon>
    </lineage>
</organism>
<protein>
    <recommendedName>
        <fullName evidence="1">Ribonuclease P protein component 4</fullName>
        <shortName evidence="1">RNase P component 4</shortName>
        <ecNumber evidence="1">3.1.26.5</ecNumber>
    </recommendedName>
    <alternativeName>
        <fullName evidence="1">Rpp21</fullName>
    </alternativeName>
</protein>
<reference key="1">
    <citation type="journal article" date="1999" name="Genetics">
        <title>Divergence of the hyperthermophilic archaea Pyrococcus furiosus and P. horikoshii inferred from complete genomic sequences.</title>
        <authorList>
            <person name="Maeder D.L."/>
            <person name="Weiss R.B."/>
            <person name="Dunn D.M."/>
            <person name="Cherry J.L."/>
            <person name="Gonzalez J.M."/>
            <person name="DiRuggiero J."/>
            <person name="Robb F.T."/>
        </authorList>
    </citation>
    <scope>NUCLEOTIDE SEQUENCE [LARGE SCALE GENOMIC DNA]</scope>
    <source>
        <strain>ATCC 43587 / DSM 3638 / JCM 8422 / Vc1</strain>
    </source>
</reference>
<reference key="2">
    <citation type="journal article" date="2006" name="Proc. Natl. Acad. Sci. U.S.A.">
        <title>Functional reconstitution and characterization of Pyrococcus furiosus RNase P.</title>
        <authorList>
            <person name="Tsai H.Y."/>
            <person name="Pulukkunat D.K."/>
            <person name="Woznick W.K."/>
            <person name="Gopalan V."/>
        </authorList>
    </citation>
    <scope>FUNCTION</scope>
    <scope>CATALYTIC ACTIVITY</scope>
    <scope>BIOPHYSICOCHEMICAL PROPERTIES</scope>
    <scope>SUBUNIT</scope>
    <source>
        <strain>ATCC 43587 / DSM 3638 / JCM 8422 / Vc1</strain>
    </source>
</reference>
<reference key="3">
    <citation type="journal article" date="2011" name="J. Mol. Biol.">
        <title>Cooperative RNP assembly: complementary rescue of structural defects by protein and RNA subunits of archaeal RNase P.</title>
        <authorList>
            <person name="Chen W.Y."/>
            <person name="Xu Y."/>
            <person name="Cho I.M."/>
            <person name="Oruganti S.V."/>
            <person name="Foster M.P."/>
            <person name="Gopalan V."/>
        </authorList>
    </citation>
    <scope>FUNCTION</scope>
    <scope>INTERACTION WITH RNP1</scope>
    <scope>SUBUNIT</scope>
</reference>
<reference key="4">
    <citation type="journal article" date="2012" name="Nucleic Acids Res.">
        <title>Fidelity of tRNA 5'-maturation: a possible basis for the functional dependence of archaeal and eukaryal RNase P on multiple protein cofactors.</title>
        <authorList>
            <person name="Chen W.Y."/>
            <person name="Singh D."/>
            <person name="Lai L.B."/>
            <person name="Stiffler M.A."/>
            <person name="Lai H.D."/>
            <person name="Foster M.P."/>
            <person name="Gopalan V."/>
        </authorList>
    </citation>
    <scope>FUNCTION</scope>
    <scope>INTERACTION WITH RNP1</scope>
    <scope>SUBUNIT</scope>
</reference>
<reference key="5">
    <citation type="journal article" date="2008" name="Biochemistry">
        <title>Solution structure of Pyrococcus furiosus RPP21, a component of the archaeal RNase P holoenzyme, and interactions with its RPP29 protein partner.</title>
        <authorList>
            <person name="Amero C.D."/>
            <person name="Boomershine W.P."/>
            <person name="Xu Y."/>
            <person name="Foster M."/>
        </authorList>
    </citation>
    <scope>STRUCTURE BY NMR IN COMPLEX WITH ZINC</scope>
    <scope>INTERACTION WITH RNP1</scope>
    <scope>SUBUNIT</scope>
    <scope>COFACTOR</scope>
</reference>
<reference key="6">
    <citation type="journal article" date="2009" name="J. Mol. Biol.">
        <title>Solution structure of an archaeal RNase P binary protein complex: formation of the 30-kDa complex between Pyrococcus furiosus RPP21 and RPP29 is accompanied by coupled protein folding and highlights critical features for protein-protein and protein-RNA interactions.</title>
        <authorList>
            <person name="Xu Y."/>
            <person name="Amero C.D."/>
            <person name="Pulukkunat D.K."/>
            <person name="Gopalan V."/>
            <person name="Foster M.P."/>
        </authorList>
    </citation>
    <scope>STRUCTURE BY NMR IN COMPLEX WITH RNP1 AND ZINC</scope>
    <scope>COFACTOR</scope>
    <scope>SUBUNIT</scope>
    <scope>MUTAGENESIS OF ALA-14</scope>
</reference>
<comment type="function">
    <text evidence="1 2 5 6">Part of ribonuclease P, a protein complex that generates mature tRNA molecules by cleaving their 5'-ends. The RNA is catalytic, but its KM for pre-tRNA is 170-fold decreased in the presence of the 4 known protein subunits (Rnp1-4). The protein subunits also decrease the amount of Mg(2+) needed for activity.</text>
</comment>
<comment type="catalytic activity">
    <reaction evidence="1 2">
        <text>Endonucleolytic cleavage of RNA, removing 5'-extranucleotides from tRNA precursor.</text>
        <dbReference type="EC" id="3.1.26.5"/>
    </reaction>
</comment>
<comment type="cofactor">
    <cofactor evidence="1 3 4">
        <name>Zn(2+)</name>
        <dbReference type="ChEBI" id="CHEBI:29105"/>
    </cofactor>
    <text evidence="1 3 4">Binds 1 zinc ion per subunit.</text>
</comment>
<comment type="biophysicochemical properties">
    <kinetics>
        <KM evidence="2">0.18 uM for E.coli pre-tRNA(Tyr)</KM>
        <text>kcat is 9.5 min(-1). For enzyme reconstituted with RNA and 4 known subunits (Rnp1-4).</text>
    </kinetics>
</comment>
<comment type="subunit">
    <text evidence="2 3 4 5 6">Consists of a catalytic RNA component and at least 4 protein subunits. Forms a subcomplex with Rnp1 which stimulates the catalytic RNA.</text>
</comment>
<comment type="subcellular location">
    <subcellularLocation>
        <location evidence="1">Cytoplasm</location>
    </subcellularLocation>
</comment>
<comment type="similarity">
    <text evidence="1">Belongs to the eukaryotic/archaeal RNase P protein component 4 family.</text>
</comment>
<accession>Q8U0H6</accession>
<keyword id="KW-0002">3D-structure</keyword>
<keyword id="KW-0963">Cytoplasm</keyword>
<keyword id="KW-0255">Endonuclease</keyword>
<keyword id="KW-0378">Hydrolase</keyword>
<keyword id="KW-0479">Metal-binding</keyword>
<keyword id="KW-0540">Nuclease</keyword>
<keyword id="KW-1185">Reference proteome</keyword>
<keyword id="KW-0819">tRNA processing</keyword>
<keyword id="KW-0862">Zinc</keyword>
<proteinExistence type="evidence at protein level"/>
<sequence length="117" mass="14303">MAKYNEKKEKKRIAKERIDILFSLAERVFPYSPELAKRYVELALLVQQKAKVKIPRKWKRRYCKKCHAFLVPGINARVRLRQKRMPHIVVKCLECGHIMRYPYIKEIKKRRKEKMEY</sequence>
<gene>
    <name evidence="1" type="primary">rnp4</name>
    <name type="ordered locus">PF1613</name>
</gene>
<evidence type="ECO:0000255" key="1">
    <source>
        <dbReference type="HAMAP-Rule" id="MF_00757"/>
    </source>
</evidence>
<evidence type="ECO:0000269" key="2">
    <source>
    </source>
</evidence>
<evidence type="ECO:0000269" key="3">
    <source>
    </source>
</evidence>
<evidence type="ECO:0000269" key="4">
    <source>
    </source>
</evidence>
<evidence type="ECO:0000269" key="5">
    <source>
    </source>
</evidence>
<evidence type="ECO:0000269" key="6">
    <source>
    </source>
</evidence>
<evidence type="ECO:0007829" key="7">
    <source>
        <dbReference type="PDB" id="2K3R"/>
    </source>
</evidence>
<dbReference type="EC" id="3.1.26.5" evidence="1"/>
<dbReference type="EMBL" id="AE009950">
    <property type="protein sequence ID" value="AAL81737.1"/>
    <property type="molecule type" value="Genomic_DNA"/>
</dbReference>
<dbReference type="RefSeq" id="WP_011012760.1">
    <property type="nucleotide sequence ID" value="NZ_CP023154.1"/>
</dbReference>
<dbReference type="PDB" id="2K3R">
    <property type="method" value="NMR"/>
    <property type="chains" value="A=1-117"/>
</dbReference>
<dbReference type="PDB" id="2KI7">
    <property type="method" value="NMR"/>
    <property type="chains" value="B=1-117"/>
</dbReference>
<dbReference type="PDBsum" id="2K3R"/>
<dbReference type="PDBsum" id="2KI7"/>
<dbReference type="BMRB" id="Q8U0H6"/>
<dbReference type="SMR" id="Q8U0H6"/>
<dbReference type="STRING" id="186497.PF1613"/>
<dbReference type="PaxDb" id="186497-PF1613"/>
<dbReference type="KEGG" id="pfu:PF1613"/>
<dbReference type="PATRIC" id="fig|186497.12.peg.1680"/>
<dbReference type="eggNOG" id="arCOG04345">
    <property type="taxonomic scope" value="Archaea"/>
</dbReference>
<dbReference type="HOGENOM" id="CLU_079140_3_1_2"/>
<dbReference type="OrthoDB" id="10058at2157"/>
<dbReference type="PhylomeDB" id="Q8U0H6"/>
<dbReference type="BRENDA" id="3.1.26.5">
    <property type="organism ID" value="5243"/>
</dbReference>
<dbReference type="EvolutionaryTrace" id="Q8U0H6"/>
<dbReference type="Proteomes" id="UP000001013">
    <property type="component" value="Chromosome"/>
</dbReference>
<dbReference type="GO" id="GO:0005737">
    <property type="term" value="C:cytoplasm"/>
    <property type="evidence" value="ECO:0007669"/>
    <property type="project" value="UniProtKB-SubCell"/>
</dbReference>
<dbReference type="GO" id="GO:0030677">
    <property type="term" value="C:ribonuclease P complex"/>
    <property type="evidence" value="ECO:0007669"/>
    <property type="project" value="UniProtKB-UniRule"/>
</dbReference>
<dbReference type="GO" id="GO:0004526">
    <property type="term" value="F:ribonuclease P activity"/>
    <property type="evidence" value="ECO:0007669"/>
    <property type="project" value="UniProtKB-UniRule"/>
</dbReference>
<dbReference type="GO" id="GO:0008270">
    <property type="term" value="F:zinc ion binding"/>
    <property type="evidence" value="ECO:0007669"/>
    <property type="project" value="UniProtKB-UniRule"/>
</dbReference>
<dbReference type="GO" id="GO:0001682">
    <property type="term" value="P:tRNA 5'-leader removal"/>
    <property type="evidence" value="ECO:0007669"/>
    <property type="project" value="UniProtKB-UniRule"/>
</dbReference>
<dbReference type="Gene3D" id="6.20.50.20">
    <property type="match status" value="1"/>
</dbReference>
<dbReference type="Gene3D" id="1.20.5.420">
    <property type="entry name" value="Immunoglobulin FC, subunit C"/>
    <property type="match status" value="1"/>
</dbReference>
<dbReference type="HAMAP" id="MF_00757">
    <property type="entry name" value="RNase_P_4"/>
    <property type="match status" value="1"/>
</dbReference>
<dbReference type="InterPro" id="IPR016432">
    <property type="entry name" value="RNP4"/>
</dbReference>
<dbReference type="InterPro" id="IPR007175">
    <property type="entry name" value="Rpr2/Snm1/Rpp21"/>
</dbReference>
<dbReference type="NCBIfam" id="NF003045">
    <property type="entry name" value="PRK03954.1"/>
    <property type="match status" value="1"/>
</dbReference>
<dbReference type="PANTHER" id="PTHR14742:SF0">
    <property type="entry name" value="RIBONUCLEASE P PROTEIN SUBUNIT P21"/>
    <property type="match status" value="1"/>
</dbReference>
<dbReference type="PANTHER" id="PTHR14742">
    <property type="entry name" value="RIBONUCLEASE P SUBUNIT P21"/>
    <property type="match status" value="1"/>
</dbReference>
<dbReference type="Pfam" id="PF04032">
    <property type="entry name" value="Rpr2"/>
    <property type="match status" value="1"/>
</dbReference>
<dbReference type="PIRSF" id="PIRSF004878">
    <property type="entry name" value="RNase_P_4"/>
    <property type="match status" value="1"/>
</dbReference>
<name>RNP4_PYRFU</name>